<comment type="function">
    <text evidence="1">Catalyzes the radical-mediated insertion of two sulfur atoms into the C-6 and C-8 positions of the octanoyl moiety bound to the lipoyl domains of lipoate-dependent enzymes, thereby converting the octanoylated domains into lipoylated derivatives.</text>
</comment>
<comment type="catalytic activity">
    <reaction evidence="1">
        <text>[[Fe-S] cluster scaffold protein carrying a second [4Fe-4S](2+) cluster] + N(6)-octanoyl-L-lysyl-[protein] + 2 oxidized [2Fe-2S]-[ferredoxin] + 2 S-adenosyl-L-methionine + 4 H(+) = [[Fe-S] cluster scaffold protein] + N(6)-[(R)-dihydrolipoyl]-L-lysyl-[protein] + 4 Fe(3+) + 2 hydrogen sulfide + 2 5'-deoxyadenosine + 2 L-methionine + 2 reduced [2Fe-2S]-[ferredoxin]</text>
        <dbReference type="Rhea" id="RHEA:16585"/>
        <dbReference type="Rhea" id="RHEA-COMP:9928"/>
        <dbReference type="Rhea" id="RHEA-COMP:10000"/>
        <dbReference type="Rhea" id="RHEA-COMP:10001"/>
        <dbReference type="Rhea" id="RHEA-COMP:10475"/>
        <dbReference type="Rhea" id="RHEA-COMP:14568"/>
        <dbReference type="Rhea" id="RHEA-COMP:14569"/>
        <dbReference type="ChEBI" id="CHEBI:15378"/>
        <dbReference type="ChEBI" id="CHEBI:17319"/>
        <dbReference type="ChEBI" id="CHEBI:29034"/>
        <dbReference type="ChEBI" id="CHEBI:29919"/>
        <dbReference type="ChEBI" id="CHEBI:33722"/>
        <dbReference type="ChEBI" id="CHEBI:33737"/>
        <dbReference type="ChEBI" id="CHEBI:33738"/>
        <dbReference type="ChEBI" id="CHEBI:57844"/>
        <dbReference type="ChEBI" id="CHEBI:59789"/>
        <dbReference type="ChEBI" id="CHEBI:78809"/>
        <dbReference type="ChEBI" id="CHEBI:83100"/>
        <dbReference type="EC" id="2.8.1.8"/>
    </reaction>
</comment>
<comment type="cofactor">
    <cofactor evidence="1">
        <name>[4Fe-4S] cluster</name>
        <dbReference type="ChEBI" id="CHEBI:49883"/>
    </cofactor>
    <text evidence="1">Binds 2 [4Fe-4S] clusters per subunit. One cluster is coordinated with 3 cysteines and an exchangeable S-adenosyl-L-methionine.</text>
</comment>
<comment type="pathway">
    <text evidence="1">Protein modification; protein lipoylation via endogenous pathway; protein N(6)-(lipoyl)lysine from octanoyl-[acyl-carrier-protein]: step 2/2.</text>
</comment>
<comment type="subcellular location">
    <subcellularLocation>
        <location evidence="1">Cytoplasm</location>
    </subcellularLocation>
</comment>
<comment type="similarity">
    <text evidence="1">Belongs to the radical SAM superfamily. Lipoyl synthase family.</text>
</comment>
<protein>
    <recommendedName>
        <fullName evidence="1">Lipoyl synthase</fullName>
        <ecNumber evidence="1">2.8.1.8</ecNumber>
    </recommendedName>
    <alternativeName>
        <fullName evidence="1">Lip-syn</fullName>
        <shortName evidence="1">LS</shortName>
    </alternativeName>
    <alternativeName>
        <fullName evidence="1">Lipoate synthase</fullName>
    </alternativeName>
    <alternativeName>
        <fullName evidence="1">Lipoic acid synthase</fullName>
    </alternativeName>
    <alternativeName>
        <fullName evidence="1">Sulfur insertion protein LipA</fullName>
    </alternativeName>
</protein>
<sequence>MSKPIQMERGVKYRDADKMALIPVKTVVTERQELLRKPEWMKIKLPADSTRIQGIKAAMRKNGLHSVCEEASCPNLSECFNHGTATFMILGAICTRRCPFCDVAHGRPVAPDANEPEKLAQTIADMGLRYVVITSVDRDDLRDGGAQHFADCIAAIRAKNPTIKIETLVPDFRGRMDRALEILTETPPDVFNHNLENVPRVYRQVRPGANYEWSLKLLERFKEAHPHIPTKSGLMVGLGETNAEIVEVMRDLRRHGVTMLTLGQYLQPSRHHLPVQRYVSPAEFDEMKEEAMAMGFTHAACGPFVRSSYHADLQAKGMEVK</sequence>
<feature type="chain" id="PRO_1000058579" description="Lipoyl synthase">
    <location>
        <begin position="1"/>
        <end position="321"/>
    </location>
</feature>
<feature type="domain" description="Radical SAM core" evidence="2">
    <location>
        <begin position="80"/>
        <end position="297"/>
    </location>
</feature>
<feature type="binding site" evidence="1">
    <location>
        <position position="68"/>
    </location>
    <ligand>
        <name>[4Fe-4S] cluster</name>
        <dbReference type="ChEBI" id="CHEBI:49883"/>
        <label>1</label>
    </ligand>
</feature>
<feature type="binding site" evidence="1">
    <location>
        <position position="73"/>
    </location>
    <ligand>
        <name>[4Fe-4S] cluster</name>
        <dbReference type="ChEBI" id="CHEBI:49883"/>
        <label>1</label>
    </ligand>
</feature>
<feature type="binding site" evidence="1">
    <location>
        <position position="79"/>
    </location>
    <ligand>
        <name>[4Fe-4S] cluster</name>
        <dbReference type="ChEBI" id="CHEBI:49883"/>
        <label>1</label>
    </ligand>
</feature>
<feature type="binding site" evidence="1">
    <location>
        <position position="94"/>
    </location>
    <ligand>
        <name>[4Fe-4S] cluster</name>
        <dbReference type="ChEBI" id="CHEBI:49883"/>
        <label>2</label>
        <note>4Fe-4S-S-AdoMet</note>
    </ligand>
</feature>
<feature type="binding site" evidence="1">
    <location>
        <position position="98"/>
    </location>
    <ligand>
        <name>[4Fe-4S] cluster</name>
        <dbReference type="ChEBI" id="CHEBI:49883"/>
        <label>2</label>
        <note>4Fe-4S-S-AdoMet</note>
    </ligand>
</feature>
<feature type="binding site" evidence="1">
    <location>
        <position position="101"/>
    </location>
    <ligand>
        <name>[4Fe-4S] cluster</name>
        <dbReference type="ChEBI" id="CHEBI:49883"/>
        <label>2</label>
        <note>4Fe-4S-S-AdoMet</note>
    </ligand>
</feature>
<feature type="binding site" evidence="1">
    <location>
        <position position="308"/>
    </location>
    <ligand>
        <name>[4Fe-4S] cluster</name>
        <dbReference type="ChEBI" id="CHEBI:49883"/>
        <label>1</label>
    </ligand>
</feature>
<gene>
    <name evidence="1" type="primary">lipA</name>
    <name type="ordered locus">Spro_1195</name>
</gene>
<evidence type="ECO:0000255" key="1">
    <source>
        <dbReference type="HAMAP-Rule" id="MF_00206"/>
    </source>
</evidence>
<evidence type="ECO:0000255" key="2">
    <source>
        <dbReference type="PROSITE-ProRule" id="PRU01266"/>
    </source>
</evidence>
<reference key="1">
    <citation type="submission" date="2007-09" db="EMBL/GenBank/DDBJ databases">
        <title>Complete sequence of chromosome of Serratia proteamaculans 568.</title>
        <authorList>
            <consortium name="US DOE Joint Genome Institute"/>
            <person name="Copeland A."/>
            <person name="Lucas S."/>
            <person name="Lapidus A."/>
            <person name="Barry K."/>
            <person name="Glavina del Rio T."/>
            <person name="Dalin E."/>
            <person name="Tice H."/>
            <person name="Pitluck S."/>
            <person name="Chain P."/>
            <person name="Malfatti S."/>
            <person name="Shin M."/>
            <person name="Vergez L."/>
            <person name="Schmutz J."/>
            <person name="Larimer F."/>
            <person name="Land M."/>
            <person name="Hauser L."/>
            <person name="Kyrpides N."/>
            <person name="Kim E."/>
            <person name="Taghavi S."/>
            <person name="Newman L."/>
            <person name="Vangronsveld J."/>
            <person name="van der Lelie D."/>
            <person name="Richardson P."/>
        </authorList>
    </citation>
    <scope>NUCLEOTIDE SEQUENCE [LARGE SCALE GENOMIC DNA]</scope>
    <source>
        <strain>568</strain>
    </source>
</reference>
<dbReference type="EC" id="2.8.1.8" evidence="1"/>
<dbReference type="EMBL" id="CP000826">
    <property type="protein sequence ID" value="ABV40299.1"/>
    <property type="molecule type" value="Genomic_DNA"/>
</dbReference>
<dbReference type="SMR" id="A8GB09"/>
<dbReference type="STRING" id="399741.Spro_1195"/>
<dbReference type="KEGG" id="spe:Spro_1195"/>
<dbReference type="eggNOG" id="COG0320">
    <property type="taxonomic scope" value="Bacteria"/>
</dbReference>
<dbReference type="HOGENOM" id="CLU_033144_2_1_6"/>
<dbReference type="OrthoDB" id="9787898at2"/>
<dbReference type="UniPathway" id="UPA00538">
    <property type="reaction ID" value="UER00593"/>
</dbReference>
<dbReference type="GO" id="GO:0005737">
    <property type="term" value="C:cytoplasm"/>
    <property type="evidence" value="ECO:0007669"/>
    <property type="project" value="UniProtKB-SubCell"/>
</dbReference>
<dbReference type="GO" id="GO:0051539">
    <property type="term" value="F:4 iron, 4 sulfur cluster binding"/>
    <property type="evidence" value="ECO:0007669"/>
    <property type="project" value="UniProtKB-UniRule"/>
</dbReference>
<dbReference type="GO" id="GO:0016992">
    <property type="term" value="F:lipoate synthase activity"/>
    <property type="evidence" value="ECO:0007669"/>
    <property type="project" value="UniProtKB-UniRule"/>
</dbReference>
<dbReference type="GO" id="GO:0046872">
    <property type="term" value="F:metal ion binding"/>
    <property type="evidence" value="ECO:0007669"/>
    <property type="project" value="UniProtKB-KW"/>
</dbReference>
<dbReference type="CDD" id="cd01335">
    <property type="entry name" value="Radical_SAM"/>
    <property type="match status" value="1"/>
</dbReference>
<dbReference type="FunFam" id="3.20.20.70:FF:000023">
    <property type="entry name" value="Lipoyl synthase"/>
    <property type="match status" value="1"/>
</dbReference>
<dbReference type="Gene3D" id="3.20.20.70">
    <property type="entry name" value="Aldolase class I"/>
    <property type="match status" value="1"/>
</dbReference>
<dbReference type="HAMAP" id="MF_00206">
    <property type="entry name" value="Lipoyl_synth"/>
    <property type="match status" value="1"/>
</dbReference>
<dbReference type="InterPro" id="IPR013785">
    <property type="entry name" value="Aldolase_TIM"/>
</dbReference>
<dbReference type="InterPro" id="IPR006638">
    <property type="entry name" value="Elp3/MiaA/NifB-like_rSAM"/>
</dbReference>
<dbReference type="InterPro" id="IPR031691">
    <property type="entry name" value="LIAS_N"/>
</dbReference>
<dbReference type="InterPro" id="IPR003698">
    <property type="entry name" value="Lipoyl_synth"/>
</dbReference>
<dbReference type="InterPro" id="IPR007197">
    <property type="entry name" value="rSAM"/>
</dbReference>
<dbReference type="NCBIfam" id="TIGR00510">
    <property type="entry name" value="lipA"/>
    <property type="match status" value="1"/>
</dbReference>
<dbReference type="NCBIfam" id="NF004019">
    <property type="entry name" value="PRK05481.1"/>
    <property type="match status" value="1"/>
</dbReference>
<dbReference type="NCBIfam" id="NF009544">
    <property type="entry name" value="PRK12928.1"/>
    <property type="match status" value="1"/>
</dbReference>
<dbReference type="PANTHER" id="PTHR10949">
    <property type="entry name" value="LIPOYL SYNTHASE"/>
    <property type="match status" value="1"/>
</dbReference>
<dbReference type="PANTHER" id="PTHR10949:SF0">
    <property type="entry name" value="LIPOYL SYNTHASE, MITOCHONDRIAL"/>
    <property type="match status" value="1"/>
</dbReference>
<dbReference type="Pfam" id="PF16881">
    <property type="entry name" value="LIAS_N"/>
    <property type="match status" value="1"/>
</dbReference>
<dbReference type="Pfam" id="PF04055">
    <property type="entry name" value="Radical_SAM"/>
    <property type="match status" value="1"/>
</dbReference>
<dbReference type="PIRSF" id="PIRSF005963">
    <property type="entry name" value="Lipoyl_synth"/>
    <property type="match status" value="1"/>
</dbReference>
<dbReference type="SFLD" id="SFLDF00271">
    <property type="entry name" value="lipoyl_synthase"/>
    <property type="match status" value="1"/>
</dbReference>
<dbReference type="SFLD" id="SFLDG01058">
    <property type="entry name" value="lipoyl_synthase_like"/>
    <property type="match status" value="1"/>
</dbReference>
<dbReference type="SMART" id="SM00729">
    <property type="entry name" value="Elp3"/>
    <property type="match status" value="1"/>
</dbReference>
<dbReference type="SUPFAM" id="SSF102114">
    <property type="entry name" value="Radical SAM enzymes"/>
    <property type="match status" value="1"/>
</dbReference>
<dbReference type="PROSITE" id="PS51918">
    <property type="entry name" value="RADICAL_SAM"/>
    <property type="match status" value="1"/>
</dbReference>
<organism>
    <name type="scientific">Serratia proteamaculans (strain 568)</name>
    <dbReference type="NCBI Taxonomy" id="399741"/>
    <lineage>
        <taxon>Bacteria</taxon>
        <taxon>Pseudomonadati</taxon>
        <taxon>Pseudomonadota</taxon>
        <taxon>Gammaproteobacteria</taxon>
        <taxon>Enterobacterales</taxon>
        <taxon>Yersiniaceae</taxon>
        <taxon>Serratia</taxon>
    </lineage>
</organism>
<keyword id="KW-0004">4Fe-4S</keyword>
<keyword id="KW-0963">Cytoplasm</keyword>
<keyword id="KW-0408">Iron</keyword>
<keyword id="KW-0411">Iron-sulfur</keyword>
<keyword id="KW-0479">Metal-binding</keyword>
<keyword id="KW-0949">S-adenosyl-L-methionine</keyword>
<keyword id="KW-0808">Transferase</keyword>
<name>LIPA_SERP5</name>
<accession>A8GB09</accession>
<proteinExistence type="inferred from homology"/>